<comment type="function">
    <text evidence="1">Catalyzes the phosphorylation of the position 2 hydroxy group of 4-diphosphocytidyl-2C-methyl-D-erythritol.</text>
</comment>
<comment type="catalytic activity">
    <reaction evidence="1">
        <text>4-CDP-2-C-methyl-D-erythritol + ATP = 4-CDP-2-C-methyl-D-erythritol 2-phosphate + ADP + H(+)</text>
        <dbReference type="Rhea" id="RHEA:18437"/>
        <dbReference type="ChEBI" id="CHEBI:15378"/>
        <dbReference type="ChEBI" id="CHEBI:30616"/>
        <dbReference type="ChEBI" id="CHEBI:57823"/>
        <dbReference type="ChEBI" id="CHEBI:57919"/>
        <dbReference type="ChEBI" id="CHEBI:456216"/>
        <dbReference type="EC" id="2.7.1.148"/>
    </reaction>
</comment>
<comment type="pathway">
    <text evidence="1">Isoprenoid biosynthesis; isopentenyl diphosphate biosynthesis via DXP pathway; isopentenyl diphosphate from 1-deoxy-D-xylulose 5-phosphate: step 3/6.</text>
</comment>
<comment type="similarity">
    <text evidence="1">Belongs to the GHMP kinase family. IspE subfamily.</text>
</comment>
<keyword id="KW-0067">ATP-binding</keyword>
<keyword id="KW-0414">Isoprene biosynthesis</keyword>
<keyword id="KW-0418">Kinase</keyword>
<keyword id="KW-0547">Nucleotide-binding</keyword>
<keyword id="KW-1185">Reference proteome</keyword>
<keyword id="KW-0808">Transferase</keyword>
<evidence type="ECO:0000255" key="1">
    <source>
        <dbReference type="HAMAP-Rule" id="MF_00061"/>
    </source>
</evidence>
<sequence length="287" mass="30707">MKSLYDICAPAKLNLFLHITGRRSDGYHLLQSVFMLIDWCDTLHFDLRVDGQISREDLATPLPFDDLVVRAARALKAASGSPLGVHVGIEKCIPAQAGMGGGSSDAASTLLALNHLWRLNFSLEKLISIGLQLGADVPFFLGGHNAWVEGIGEKMDPVVLPSGRFLVVKPVEGLETRLIFSDPALKRDSETAIISGFAANAFGFGRNDLQSVAQRLCPGVTQALEWLASRGLSGRMTGSGSAVFAQTLQDVDLRGAPSGFQVRLCKSLDVHPLVGWAVSDRLSVGSA</sequence>
<feature type="chain" id="PRO_0000335747" description="4-diphosphocytidyl-2-C-methyl-D-erythritol kinase">
    <location>
        <begin position="1"/>
        <end position="287"/>
    </location>
</feature>
<feature type="active site" evidence="1">
    <location>
        <position position="12"/>
    </location>
</feature>
<feature type="active site" evidence="1">
    <location>
        <position position="136"/>
    </location>
</feature>
<feature type="binding site" evidence="1">
    <location>
        <begin position="94"/>
        <end position="104"/>
    </location>
    <ligand>
        <name>ATP</name>
        <dbReference type="ChEBI" id="CHEBI:30616"/>
    </ligand>
</feature>
<protein>
    <recommendedName>
        <fullName evidence="1">4-diphosphocytidyl-2-C-methyl-D-erythritol kinase</fullName>
        <shortName evidence="1">CMK</shortName>
        <ecNumber evidence="1">2.7.1.148</ecNumber>
    </recommendedName>
    <alternativeName>
        <fullName evidence="1">4-(cytidine-5'-diphospho)-2-C-methyl-D-erythritol kinase</fullName>
    </alternativeName>
</protein>
<dbReference type="EC" id="2.7.1.148" evidence="1"/>
<dbReference type="EMBL" id="CP000267">
    <property type="protein sequence ID" value="ABD69389.1"/>
    <property type="molecule type" value="Genomic_DNA"/>
</dbReference>
<dbReference type="RefSeq" id="WP_011463957.1">
    <property type="nucleotide sequence ID" value="NC_007908.1"/>
</dbReference>
<dbReference type="SMR" id="Q21XW4"/>
<dbReference type="STRING" id="338969.Rfer_1659"/>
<dbReference type="KEGG" id="rfr:Rfer_1659"/>
<dbReference type="eggNOG" id="COG1947">
    <property type="taxonomic scope" value="Bacteria"/>
</dbReference>
<dbReference type="HOGENOM" id="CLU_053057_3_0_4"/>
<dbReference type="OrthoDB" id="9809438at2"/>
<dbReference type="UniPathway" id="UPA00056">
    <property type="reaction ID" value="UER00094"/>
</dbReference>
<dbReference type="Proteomes" id="UP000008332">
    <property type="component" value="Chromosome"/>
</dbReference>
<dbReference type="GO" id="GO:0050515">
    <property type="term" value="F:4-(cytidine 5'-diphospho)-2-C-methyl-D-erythritol kinase activity"/>
    <property type="evidence" value="ECO:0007669"/>
    <property type="project" value="UniProtKB-UniRule"/>
</dbReference>
<dbReference type="GO" id="GO:0005524">
    <property type="term" value="F:ATP binding"/>
    <property type="evidence" value="ECO:0007669"/>
    <property type="project" value="UniProtKB-UniRule"/>
</dbReference>
<dbReference type="GO" id="GO:0019288">
    <property type="term" value="P:isopentenyl diphosphate biosynthetic process, methylerythritol 4-phosphate pathway"/>
    <property type="evidence" value="ECO:0007669"/>
    <property type="project" value="UniProtKB-UniRule"/>
</dbReference>
<dbReference type="GO" id="GO:0016114">
    <property type="term" value="P:terpenoid biosynthetic process"/>
    <property type="evidence" value="ECO:0007669"/>
    <property type="project" value="InterPro"/>
</dbReference>
<dbReference type="Gene3D" id="3.30.230.10">
    <property type="match status" value="1"/>
</dbReference>
<dbReference type="Gene3D" id="3.30.70.890">
    <property type="entry name" value="GHMP kinase, C-terminal domain"/>
    <property type="match status" value="1"/>
</dbReference>
<dbReference type="HAMAP" id="MF_00061">
    <property type="entry name" value="IspE"/>
    <property type="match status" value="1"/>
</dbReference>
<dbReference type="InterPro" id="IPR013750">
    <property type="entry name" value="GHMP_kinase_C_dom"/>
</dbReference>
<dbReference type="InterPro" id="IPR036554">
    <property type="entry name" value="GHMP_kinase_C_sf"/>
</dbReference>
<dbReference type="InterPro" id="IPR006204">
    <property type="entry name" value="GHMP_kinase_N_dom"/>
</dbReference>
<dbReference type="InterPro" id="IPR004424">
    <property type="entry name" value="IspE"/>
</dbReference>
<dbReference type="InterPro" id="IPR020568">
    <property type="entry name" value="Ribosomal_Su5_D2-typ_SF"/>
</dbReference>
<dbReference type="InterPro" id="IPR014721">
    <property type="entry name" value="Ribsml_uS5_D2-typ_fold_subgr"/>
</dbReference>
<dbReference type="NCBIfam" id="TIGR00154">
    <property type="entry name" value="ispE"/>
    <property type="match status" value="1"/>
</dbReference>
<dbReference type="PANTHER" id="PTHR43527">
    <property type="entry name" value="4-DIPHOSPHOCYTIDYL-2-C-METHYL-D-ERYTHRITOL KINASE, CHLOROPLASTIC"/>
    <property type="match status" value="1"/>
</dbReference>
<dbReference type="PANTHER" id="PTHR43527:SF2">
    <property type="entry name" value="4-DIPHOSPHOCYTIDYL-2-C-METHYL-D-ERYTHRITOL KINASE, CHLOROPLASTIC"/>
    <property type="match status" value="1"/>
</dbReference>
<dbReference type="Pfam" id="PF08544">
    <property type="entry name" value="GHMP_kinases_C"/>
    <property type="match status" value="1"/>
</dbReference>
<dbReference type="Pfam" id="PF00288">
    <property type="entry name" value="GHMP_kinases_N"/>
    <property type="match status" value="1"/>
</dbReference>
<dbReference type="PIRSF" id="PIRSF010376">
    <property type="entry name" value="IspE"/>
    <property type="match status" value="1"/>
</dbReference>
<dbReference type="SUPFAM" id="SSF55060">
    <property type="entry name" value="GHMP Kinase, C-terminal domain"/>
    <property type="match status" value="1"/>
</dbReference>
<dbReference type="SUPFAM" id="SSF54211">
    <property type="entry name" value="Ribosomal protein S5 domain 2-like"/>
    <property type="match status" value="1"/>
</dbReference>
<accession>Q21XW4</accession>
<reference key="1">
    <citation type="submission" date="2006-02" db="EMBL/GenBank/DDBJ databases">
        <title>Complete sequence of chromosome of Rhodoferax ferrireducens DSM 15236.</title>
        <authorList>
            <person name="Copeland A."/>
            <person name="Lucas S."/>
            <person name="Lapidus A."/>
            <person name="Barry K."/>
            <person name="Detter J.C."/>
            <person name="Glavina del Rio T."/>
            <person name="Hammon N."/>
            <person name="Israni S."/>
            <person name="Pitluck S."/>
            <person name="Brettin T."/>
            <person name="Bruce D."/>
            <person name="Han C."/>
            <person name="Tapia R."/>
            <person name="Gilna P."/>
            <person name="Kiss H."/>
            <person name="Schmutz J."/>
            <person name="Larimer F."/>
            <person name="Land M."/>
            <person name="Kyrpides N."/>
            <person name="Ivanova N."/>
            <person name="Richardson P."/>
        </authorList>
    </citation>
    <scope>NUCLEOTIDE SEQUENCE [LARGE SCALE GENOMIC DNA]</scope>
    <source>
        <strain>ATCC BAA-621 / DSM 15236 / T118</strain>
    </source>
</reference>
<proteinExistence type="inferred from homology"/>
<organism>
    <name type="scientific">Albidiferax ferrireducens (strain ATCC BAA-621 / DSM 15236 / T118)</name>
    <name type="common">Rhodoferax ferrireducens</name>
    <dbReference type="NCBI Taxonomy" id="338969"/>
    <lineage>
        <taxon>Bacteria</taxon>
        <taxon>Pseudomonadati</taxon>
        <taxon>Pseudomonadota</taxon>
        <taxon>Betaproteobacteria</taxon>
        <taxon>Burkholderiales</taxon>
        <taxon>Comamonadaceae</taxon>
        <taxon>Rhodoferax</taxon>
    </lineage>
</organism>
<gene>
    <name evidence="1" type="primary">ispE</name>
    <name type="ordered locus">Rfer_1659</name>
</gene>
<name>ISPE_ALBFT</name>